<gene>
    <name type="primary">SEC11</name>
    <name type="ORF">PICST_36729</name>
</gene>
<name>SEC11_PICST</name>
<feature type="chain" id="PRO_0000412363" description="Signal peptidase complex catalytic subunit SEC11">
    <location>
        <begin position="1"/>
        <end position="166"/>
    </location>
</feature>
<feature type="topological domain" description="Cytoplasmic" evidence="3">
    <location>
        <begin position="1"/>
        <end position="9"/>
    </location>
</feature>
<feature type="transmembrane region" description="Helical; Signal-anchor for type II membrane protein" evidence="3">
    <location>
        <begin position="10"/>
        <end position="30"/>
    </location>
</feature>
<feature type="topological domain" description="Lumenal" evidence="3">
    <location>
        <begin position="31"/>
        <end position="166"/>
    </location>
</feature>
<feature type="region of interest" description="C-terminal short (CTS) helix" evidence="2">
    <location>
        <begin position="152"/>
        <end position="163"/>
    </location>
</feature>
<feature type="active site" description="Charge relay system" evidence="1">
    <location>
        <position position="44"/>
    </location>
</feature>
<feature type="active site" description="Charge relay system" evidence="1">
    <location>
        <position position="83"/>
    </location>
</feature>
<feature type="active site" description="Charge relay system" evidence="1">
    <location>
        <position position="108"/>
    </location>
</feature>
<sequence length="166" mass="18834">MNIRQQLTQFLSLAYVFTSAFVIWKSLGIITNSHSPIVVVLSGSMEPAFQRGDILFLWNRDQEAKVGDIVVYEIQGRNIPIVHRVLREHHNSDKQLLLTKGDNNAVDDLGLYAKKQKYLNQKTDLVGSVKAYLPKLGYVTILITENVYFKYGMLGLMCISTLLTNE</sequence>
<dbReference type="EC" id="3.4.21.89" evidence="1"/>
<dbReference type="EMBL" id="CP000500">
    <property type="protein sequence ID" value="ABN67515.1"/>
    <property type="molecule type" value="Genomic_DNA"/>
</dbReference>
<dbReference type="RefSeq" id="XP_001385544.1">
    <property type="nucleotide sequence ID" value="XM_001385507.1"/>
</dbReference>
<dbReference type="SMR" id="A3LXS1"/>
<dbReference type="FunCoup" id="A3LXS1">
    <property type="interactions" value="694"/>
</dbReference>
<dbReference type="STRING" id="322104.A3LXS1"/>
<dbReference type="MEROPS" id="S26.010"/>
<dbReference type="GeneID" id="4840037"/>
<dbReference type="KEGG" id="pic:PICST_36729"/>
<dbReference type="eggNOG" id="KOG3342">
    <property type="taxonomic scope" value="Eukaryota"/>
</dbReference>
<dbReference type="HOGENOM" id="CLU_089996_0_0_1"/>
<dbReference type="InParanoid" id="A3LXS1"/>
<dbReference type="OMA" id="ILMNEYP"/>
<dbReference type="OrthoDB" id="10257561at2759"/>
<dbReference type="Proteomes" id="UP000002258">
    <property type="component" value="Chromosome 6"/>
</dbReference>
<dbReference type="GO" id="GO:0005787">
    <property type="term" value="C:signal peptidase complex"/>
    <property type="evidence" value="ECO:0007669"/>
    <property type="project" value="EnsemblFungi"/>
</dbReference>
<dbReference type="GO" id="GO:0004252">
    <property type="term" value="F:serine-type endopeptidase activity"/>
    <property type="evidence" value="ECO:0007669"/>
    <property type="project" value="UniProtKB-EC"/>
</dbReference>
<dbReference type="GO" id="GO:0045047">
    <property type="term" value="P:protein targeting to ER"/>
    <property type="evidence" value="ECO:0007669"/>
    <property type="project" value="EnsemblFungi"/>
</dbReference>
<dbReference type="GO" id="GO:0006465">
    <property type="term" value="P:signal peptide processing"/>
    <property type="evidence" value="ECO:0007669"/>
    <property type="project" value="EnsemblFungi"/>
</dbReference>
<dbReference type="CDD" id="cd06530">
    <property type="entry name" value="S26_SPase_I"/>
    <property type="match status" value="1"/>
</dbReference>
<dbReference type="Gene3D" id="2.10.109.10">
    <property type="entry name" value="Umud Fragment, subunit A"/>
    <property type="match status" value="1"/>
</dbReference>
<dbReference type="InterPro" id="IPR036286">
    <property type="entry name" value="LexA/Signal_pep-like_sf"/>
</dbReference>
<dbReference type="InterPro" id="IPR019756">
    <property type="entry name" value="Pept_S26A_signal_pept_1_Ser-AS"/>
</dbReference>
<dbReference type="InterPro" id="IPR015927">
    <property type="entry name" value="Peptidase_S24_S26A/B/C"/>
</dbReference>
<dbReference type="InterPro" id="IPR019533">
    <property type="entry name" value="Peptidase_S26"/>
</dbReference>
<dbReference type="InterPro" id="IPR001733">
    <property type="entry name" value="Peptidase_S26B"/>
</dbReference>
<dbReference type="NCBIfam" id="TIGR02228">
    <property type="entry name" value="sigpep_I_arch"/>
    <property type="match status" value="1"/>
</dbReference>
<dbReference type="PANTHER" id="PTHR10806">
    <property type="entry name" value="SIGNAL PEPTIDASE COMPLEX CATALYTIC SUBUNIT SEC11"/>
    <property type="match status" value="1"/>
</dbReference>
<dbReference type="PANTHER" id="PTHR10806:SF6">
    <property type="entry name" value="SIGNAL PEPTIDASE COMPLEX CATALYTIC SUBUNIT SEC11"/>
    <property type="match status" value="1"/>
</dbReference>
<dbReference type="Pfam" id="PF00717">
    <property type="entry name" value="Peptidase_S24"/>
    <property type="match status" value="1"/>
</dbReference>
<dbReference type="PRINTS" id="PR00728">
    <property type="entry name" value="SIGNALPTASE"/>
</dbReference>
<dbReference type="SUPFAM" id="SSF51306">
    <property type="entry name" value="LexA/Signal peptidase"/>
    <property type="match status" value="1"/>
</dbReference>
<dbReference type="PROSITE" id="PS00501">
    <property type="entry name" value="SPASE_I_1"/>
    <property type="match status" value="1"/>
</dbReference>
<dbReference type="PROSITE" id="PS00761">
    <property type="entry name" value="SPASE_I_3"/>
    <property type="match status" value="1"/>
</dbReference>
<evidence type="ECO:0000250" key="1">
    <source>
        <dbReference type="UniProtKB" id="P15367"/>
    </source>
</evidence>
<evidence type="ECO:0000250" key="2">
    <source>
        <dbReference type="UniProtKB" id="P67812"/>
    </source>
</evidence>
<evidence type="ECO:0000255" key="3"/>
<evidence type="ECO:0000305" key="4"/>
<protein>
    <recommendedName>
        <fullName>Signal peptidase complex catalytic subunit SEC11</fullName>
        <ecNumber evidence="1">3.4.21.89</ecNumber>
    </recommendedName>
    <alternativeName>
        <fullName>Signal peptidase I</fullName>
    </alternativeName>
</protein>
<keyword id="KW-0256">Endoplasmic reticulum</keyword>
<keyword id="KW-0378">Hydrolase</keyword>
<keyword id="KW-0472">Membrane</keyword>
<keyword id="KW-0645">Protease</keyword>
<keyword id="KW-1185">Reference proteome</keyword>
<keyword id="KW-0735">Signal-anchor</keyword>
<keyword id="KW-0812">Transmembrane</keyword>
<keyword id="KW-1133">Transmembrane helix</keyword>
<accession>A3LXS1</accession>
<comment type="function">
    <text evidence="1 2">Catalytic component of the signal peptidase complex (SPC) which catalyzes the cleavage of N-terminal signal sequences from nascent proteins as they are translocated into the lumen of the endoplasmic reticulum (By similarity). Specifically cleaves N-terminal signal peptides that contain a hydrophobic alpha-helix (h-region) shorter than 18-20 amino acids (By similarity).</text>
</comment>
<comment type="catalytic activity">
    <reaction evidence="1">
        <text>Cleavage of hydrophobic, N-terminal signal or leader sequences from secreted and periplasmic proteins.</text>
        <dbReference type="EC" id="3.4.21.89"/>
    </reaction>
</comment>
<comment type="subunit">
    <text evidence="1 2">Component of the signal peptidase complex (SPC) composed of a catalytic subunit SEC11 and three accessory subunits SPC1, SPC2 and SPC3 (By similarity). The complex induces a local thinning of the ER membrane which is used to measure the length of the signal peptide (SP) h-region of protein substrates. This ensures the selectivity of the complex towards h-regions shorter than 18-20 amino acids (By similarity). SPC associates with the translocon complex (By similarity).</text>
</comment>
<comment type="subcellular location">
    <subcellularLocation>
        <location evidence="1">Endoplasmic reticulum membrane</location>
        <topology evidence="1">Single-pass type II membrane protein</topology>
    </subcellularLocation>
</comment>
<comment type="domain">
    <text evidence="2">The C-terminal short (CTS) helix is essential for catalytic activity. It may be accommodated as a transmembrane helix in the thinned membrane environment of the complex, similarly to the signal peptide in the complex substrates.</text>
</comment>
<comment type="similarity">
    <text evidence="4">Belongs to the peptidase S26B family.</text>
</comment>
<reference key="1">
    <citation type="journal article" date="2007" name="Nat. Biotechnol.">
        <title>Genome sequence of the lignocellulose-bioconverting and xylose-fermenting yeast Pichia stipitis.</title>
        <authorList>
            <person name="Jeffries T.W."/>
            <person name="Grigoriev I.V."/>
            <person name="Grimwood J."/>
            <person name="Laplaza J.M."/>
            <person name="Aerts A."/>
            <person name="Salamov A."/>
            <person name="Schmutz J."/>
            <person name="Lindquist E."/>
            <person name="Dehal P."/>
            <person name="Shapiro H."/>
            <person name="Jin Y.-S."/>
            <person name="Passoth V."/>
            <person name="Richardson P.M."/>
        </authorList>
    </citation>
    <scope>NUCLEOTIDE SEQUENCE [LARGE SCALE GENOMIC DNA]</scope>
    <source>
        <strain>ATCC 58785 / CBS 6054 / NBRC 10063 / NRRL Y-11545</strain>
    </source>
</reference>
<organism>
    <name type="scientific">Scheffersomyces stipitis (strain ATCC 58785 / CBS 6054 / NBRC 10063 / NRRL Y-11545)</name>
    <name type="common">Yeast</name>
    <name type="synonym">Pichia stipitis</name>
    <dbReference type="NCBI Taxonomy" id="322104"/>
    <lineage>
        <taxon>Eukaryota</taxon>
        <taxon>Fungi</taxon>
        <taxon>Dikarya</taxon>
        <taxon>Ascomycota</taxon>
        <taxon>Saccharomycotina</taxon>
        <taxon>Pichiomycetes</taxon>
        <taxon>Debaryomycetaceae</taxon>
        <taxon>Scheffersomyces</taxon>
    </lineage>
</organism>
<proteinExistence type="inferred from homology"/>